<dbReference type="EC" id="2.3.1.292" evidence="2"/>
<dbReference type="EMBL" id="LT708304">
    <property type="protein sequence ID" value="SIU01580.1"/>
    <property type="molecule type" value="Genomic_DNA"/>
</dbReference>
<dbReference type="RefSeq" id="NP_856604.1">
    <property type="nucleotide sequence ID" value="NC_002945.3"/>
</dbReference>
<dbReference type="RefSeq" id="WP_010950801.1">
    <property type="nucleotide sequence ID" value="NC_002945.4"/>
</dbReference>
<dbReference type="SMR" id="Q7TXL7"/>
<dbReference type="KEGG" id="mbo:BQ2027_MB2959"/>
<dbReference type="PATRIC" id="fig|233413.5.peg.3247"/>
<dbReference type="BioCyc" id="MetaCyc:MONOMER-19629"/>
<dbReference type="UniPathway" id="UPA00094"/>
<dbReference type="Proteomes" id="UP000001419">
    <property type="component" value="Chromosome"/>
</dbReference>
<dbReference type="GO" id="GO:0005886">
    <property type="term" value="C:plasma membrane"/>
    <property type="evidence" value="ECO:0007669"/>
    <property type="project" value="TreeGrafter"/>
</dbReference>
<dbReference type="GO" id="GO:0034081">
    <property type="term" value="C:polyketide synthase complex"/>
    <property type="evidence" value="ECO:0000250"/>
    <property type="project" value="UniProtKB"/>
</dbReference>
<dbReference type="GO" id="GO:0004315">
    <property type="term" value="F:3-oxoacyl-[acyl-carrier-protein] synthase activity"/>
    <property type="evidence" value="ECO:0007669"/>
    <property type="project" value="InterPro"/>
</dbReference>
<dbReference type="GO" id="GO:0004312">
    <property type="term" value="F:fatty acid synthase activity"/>
    <property type="evidence" value="ECO:0007669"/>
    <property type="project" value="TreeGrafter"/>
</dbReference>
<dbReference type="GO" id="GO:0016491">
    <property type="term" value="F:oxidoreductase activity"/>
    <property type="evidence" value="ECO:0007669"/>
    <property type="project" value="UniProtKB-KW"/>
</dbReference>
<dbReference type="GO" id="GO:0031177">
    <property type="term" value="F:phosphopantetheine binding"/>
    <property type="evidence" value="ECO:0007669"/>
    <property type="project" value="InterPro"/>
</dbReference>
<dbReference type="GO" id="GO:0071766">
    <property type="term" value="P:Actinobacterium-type cell wall biogenesis"/>
    <property type="evidence" value="ECO:0000250"/>
    <property type="project" value="UniProtKB"/>
</dbReference>
<dbReference type="GO" id="GO:0071770">
    <property type="term" value="P:DIM/DIP cell wall layer assembly"/>
    <property type="evidence" value="ECO:0007669"/>
    <property type="project" value="TreeGrafter"/>
</dbReference>
<dbReference type="GO" id="GO:0006633">
    <property type="term" value="P:fatty acid biosynthetic process"/>
    <property type="evidence" value="ECO:0007669"/>
    <property type="project" value="UniProtKB-UniPathway"/>
</dbReference>
<dbReference type="GO" id="GO:0097041">
    <property type="term" value="P:phenolic phthiocerol biosynthetic process"/>
    <property type="evidence" value="ECO:0000250"/>
    <property type="project" value="UniProtKB"/>
</dbReference>
<dbReference type="GO" id="GO:0097040">
    <property type="term" value="P:phthiocerol biosynthetic process"/>
    <property type="evidence" value="ECO:0000250"/>
    <property type="project" value="UniProtKB"/>
</dbReference>
<dbReference type="CDD" id="cd08955">
    <property type="entry name" value="KR_2_FAS_SDR_x"/>
    <property type="match status" value="1"/>
</dbReference>
<dbReference type="CDD" id="cd00833">
    <property type="entry name" value="PKS"/>
    <property type="match status" value="1"/>
</dbReference>
<dbReference type="FunFam" id="3.30.70.250:FF:000003">
    <property type="entry name" value="Polyketide beta-ketoacyl synthase Pks3"/>
    <property type="match status" value="1"/>
</dbReference>
<dbReference type="FunFam" id="3.40.47.10:FF:000019">
    <property type="entry name" value="Polyketide synthase type I"/>
    <property type="match status" value="1"/>
</dbReference>
<dbReference type="Gene3D" id="3.40.47.10">
    <property type="match status" value="1"/>
</dbReference>
<dbReference type="Gene3D" id="1.10.1200.10">
    <property type="entry name" value="ACP-like"/>
    <property type="match status" value="1"/>
</dbReference>
<dbReference type="Gene3D" id="3.30.70.250">
    <property type="entry name" value="Malonyl-CoA ACP transacylase, ACP-binding"/>
    <property type="match status" value="1"/>
</dbReference>
<dbReference type="Gene3D" id="3.40.366.10">
    <property type="entry name" value="Malonyl-Coenzyme A Acyl Carrier Protein, domain 2"/>
    <property type="match status" value="1"/>
</dbReference>
<dbReference type="Gene3D" id="3.40.50.720">
    <property type="entry name" value="NAD(P)-binding Rossmann-like Domain"/>
    <property type="match status" value="1"/>
</dbReference>
<dbReference type="Gene3D" id="3.10.129.110">
    <property type="entry name" value="Polyketide synthase dehydratase"/>
    <property type="match status" value="1"/>
</dbReference>
<dbReference type="InterPro" id="IPR001227">
    <property type="entry name" value="Ac_transferase_dom_sf"/>
</dbReference>
<dbReference type="InterPro" id="IPR036736">
    <property type="entry name" value="ACP-like_sf"/>
</dbReference>
<dbReference type="InterPro" id="IPR014043">
    <property type="entry name" value="Acyl_transferase_dom"/>
</dbReference>
<dbReference type="InterPro" id="IPR016035">
    <property type="entry name" value="Acyl_Trfase/lysoPLipase"/>
</dbReference>
<dbReference type="InterPro" id="IPR018201">
    <property type="entry name" value="Ketoacyl_synth_AS"/>
</dbReference>
<dbReference type="InterPro" id="IPR014031">
    <property type="entry name" value="Ketoacyl_synth_C"/>
</dbReference>
<dbReference type="InterPro" id="IPR014030">
    <property type="entry name" value="Ketoacyl_synth_N"/>
</dbReference>
<dbReference type="InterPro" id="IPR016036">
    <property type="entry name" value="Malonyl_transacylase_ACP-bd"/>
</dbReference>
<dbReference type="InterPro" id="IPR036291">
    <property type="entry name" value="NAD(P)-bd_dom_sf"/>
</dbReference>
<dbReference type="InterPro" id="IPR032821">
    <property type="entry name" value="PKS_assoc"/>
</dbReference>
<dbReference type="InterPro" id="IPR020841">
    <property type="entry name" value="PKS_Beta-ketoAc_synthase_dom"/>
</dbReference>
<dbReference type="InterPro" id="IPR042104">
    <property type="entry name" value="PKS_dehydratase_sf"/>
</dbReference>
<dbReference type="InterPro" id="IPR020807">
    <property type="entry name" value="PKS_DH"/>
</dbReference>
<dbReference type="InterPro" id="IPR049551">
    <property type="entry name" value="PKS_DH_C"/>
</dbReference>
<dbReference type="InterPro" id="IPR049552">
    <property type="entry name" value="PKS_DH_N"/>
</dbReference>
<dbReference type="InterPro" id="IPR013968">
    <property type="entry name" value="PKS_KR"/>
</dbReference>
<dbReference type="InterPro" id="IPR049900">
    <property type="entry name" value="PKS_mFAS_DH"/>
</dbReference>
<dbReference type="InterPro" id="IPR050091">
    <property type="entry name" value="PKS_NRPS_Biosynth_Enz"/>
</dbReference>
<dbReference type="InterPro" id="IPR020806">
    <property type="entry name" value="PKS_PP-bd"/>
</dbReference>
<dbReference type="InterPro" id="IPR009081">
    <property type="entry name" value="PP-bd_ACP"/>
</dbReference>
<dbReference type="InterPro" id="IPR006162">
    <property type="entry name" value="Ppantetheine_attach_site"/>
</dbReference>
<dbReference type="InterPro" id="IPR016039">
    <property type="entry name" value="Thiolase-like"/>
</dbReference>
<dbReference type="PANTHER" id="PTHR43775">
    <property type="entry name" value="FATTY ACID SYNTHASE"/>
    <property type="match status" value="1"/>
</dbReference>
<dbReference type="PANTHER" id="PTHR43775:SF37">
    <property type="entry name" value="SI:DKEY-61P9.11"/>
    <property type="match status" value="1"/>
</dbReference>
<dbReference type="Pfam" id="PF00698">
    <property type="entry name" value="Acyl_transf_1"/>
    <property type="match status" value="1"/>
</dbReference>
<dbReference type="Pfam" id="PF16197">
    <property type="entry name" value="KAsynt_C_assoc"/>
    <property type="match status" value="1"/>
</dbReference>
<dbReference type="Pfam" id="PF00109">
    <property type="entry name" value="ketoacyl-synt"/>
    <property type="match status" value="1"/>
</dbReference>
<dbReference type="Pfam" id="PF02801">
    <property type="entry name" value="Ketoacyl-synt_C"/>
    <property type="match status" value="1"/>
</dbReference>
<dbReference type="Pfam" id="PF08659">
    <property type="entry name" value="KR"/>
    <property type="match status" value="1"/>
</dbReference>
<dbReference type="Pfam" id="PF21089">
    <property type="entry name" value="PKS_DH_N"/>
    <property type="match status" value="1"/>
</dbReference>
<dbReference type="Pfam" id="PF00550">
    <property type="entry name" value="PP-binding"/>
    <property type="match status" value="1"/>
</dbReference>
<dbReference type="Pfam" id="PF14765">
    <property type="entry name" value="PS-DH"/>
    <property type="match status" value="1"/>
</dbReference>
<dbReference type="SMART" id="SM00827">
    <property type="entry name" value="PKS_AT"/>
    <property type="match status" value="1"/>
</dbReference>
<dbReference type="SMART" id="SM00826">
    <property type="entry name" value="PKS_DH"/>
    <property type="match status" value="1"/>
</dbReference>
<dbReference type="SMART" id="SM00822">
    <property type="entry name" value="PKS_KR"/>
    <property type="match status" value="1"/>
</dbReference>
<dbReference type="SMART" id="SM00825">
    <property type="entry name" value="PKS_KS"/>
    <property type="match status" value="1"/>
</dbReference>
<dbReference type="SMART" id="SM00823">
    <property type="entry name" value="PKS_PP"/>
    <property type="match status" value="1"/>
</dbReference>
<dbReference type="SUPFAM" id="SSF47336">
    <property type="entry name" value="ACP-like"/>
    <property type="match status" value="1"/>
</dbReference>
<dbReference type="SUPFAM" id="SSF52151">
    <property type="entry name" value="FabD/lysophospholipase-like"/>
    <property type="match status" value="1"/>
</dbReference>
<dbReference type="SUPFAM" id="SSF51735">
    <property type="entry name" value="NAD(P)-binding Rossmann-fold domains"/>
    <property type="match status" value="2"/>
</dbReference>
<dbReference type="SUPFAM" id="SSF55048">
    <property type="entry name" value="Probable ACP-binding domain of malonyl-CoA ACP transacylase"/>
    <property type="match status" value="1"/>
</dbReference>
<dbReference type="SUPFAM" id="SSF53901">
    <property type="entry name" value="Thiolase-like"/>
    <property type="match status" value="1"/>
</dbReference>
<dbReference type="PROSITE" id="PS50075">
    <property type="entry name" value="CARRIER"/>
    <property type="match status" value="1"/>
</dbReference>
<dbReference type="PROSITE" id="PS00606">
    <property type="entry name" value="KS3_1"/>
    <property type="match status" value="1"/>
</dbReference>
<dbReference type="PROSITE" id="PS52004">
    <property type="entry name" value="KS3_2"/>
    <property type="match status" value="1"/>
</dbReference>
<dbReference type="PROSITE" id="PS00012">
    <property type="entry name" value="PHOSPHOPANTETHEINE"/>
    <property type="match status" value="1"/>
</dbReference>
<dbReference type="PROSITE" id="PS52019">
    <property type="entry name" value="PKS_MFAS_DH"/>
    <property type="match status" value="1"/>
</dbReference>
<sequence>MTSLAERAAQLSPNARAALARELVRAGTTFPTDICEPVAVVGIGCRFPGNVTGPESFWQLLADGVDTIEQVPPDRWDADAFYDPDPSASGRMTTKWGGFVSDVDAFDADFFGITPREAVAMDPQHRILLEVAWEALEHAGIPPDSLSGTRTGVMMGLSSWDYTIVNIERRADIDAYLSTGTPHCAAVGRIAYLLGLRGPAVAVDTACSSSLVAIHLACQSLRLRETDVALAGGVQLTLSPFTAIALSKWSALSPTGRCNSFDANADGFVRGEGCGVVVLKRLADAVRDQDRVLAVVRGSATNSDGRSNGMTAPNALAQRDVITSALKLADVTPDSVNYVETHGTGTVLGDPIEFESLAATYGLGKGQGESPCALGSVKTNIGHLEAAAGVAGFIKAVLAVQRGHIPRNLHFTRWNPAIDASATRLFVPTESAPWPAAAGPRRAAVSSFGLSGTNAHVVVEQAPDTAVAAAGGMPYVSALNVSGKTAARVASAAAVLADWMSGPGAAAPLADVAHTLNRHRARHAKFATVIARDRAEAIAGLRALAAGQPRVGVVDCDQHAGGPGRVFVYSGQGSQWASMGQQLLANEPAFAKAVAELDPIFVDQVGFSLQQTLIDGDEVVGIDRIQPVLVGMQLALTELWRSYGVIPDAVIGHSMGEVSAAVVAGALTPEQGLRVITTRSRLMARLSGQGAMALLELDADAAEALIAGYPQVTLAVHASPRQTVIAGPPEQVDTVIAAVATQNRLARRVEVDVASHHPIIDPILPELRSALADLTPQPPSIPIISTTYESAQPVADADYWSANLRNPVRFHQAVTAAGVDHNTFIEISPHPVLTHALTDTLDPDGSHTVMSTMNRELDQTLYFHAQLAAVGVAASEHTTGRLVDLPPTPWHHQRFWVTDRSAMSELAATHPLLGAHIEMPRNGDHVWQTDVGTEVCPWLADHKVFGQPIMPAAGFAEIALAAASEALGTAADAVAPNIVINQFEVEQMLPLDGHTPLTTQLIRGGDSQIRVEIYSRTRGGEFCRHATAKVEQSPRECAHAHPEAQGPATGTTVSPADFYALLRQTGQHHGPAFAALSRIVRLADGSAETEISIPDEAPRHPGYRLHPVVLDAALQSVGAAIPDGEIAGSAEASYLPVSFETIRVYRDIGRHVRCRAHLTNLDGGTGKMGRIVLINDAGHIAAEVDGIYLRRVERRAVPLPLEQKIFDAEWTESPIAAVPAPEPAAETTRGSWLVLADATVDAPGKAQAKSMADDFVQQWRSPMRRVHTADIHDESAVLAAFAETAGDPEHPPVGVVVFVGGASSRLDDELAAARDTVWSITTVVRAVVGTWHGRSPRLWLVTGGGLSVADDEPGTPAAASLKGLVRVLAFEHPDMRTTLVDLDITQDPLTALSAELRNAGSGSRHDDVIAWRGERRFVERLSRATIDVSKGHPVVRQGASYVVTGGLGGLGLVVARWLVDRGAGRVVLGGRSDPTDEQCNVLAELQTRAEIVVVRGDVASPGVAEKLIETARQSGGQLRGVVHAAAVIEDSLVFSMSRDNLERVWAPKATGALRMHEATADCELDWWLGFSSAASLLGSPGQAAYACASAWLDALVGWRRASGLPAAVINWGPWSEVGVAQALVGSVLDTISVAEGIEALDSLLAADRIRTGVARLRADRALVAFPEIRSISYFTQVVEELDSAGDLGDWGGPDALADLDPGEARRAVTERMCARIAAVMGYTDQSTVEPAVPLDKPLTELGLDSLMAVRIRNGARADFGVEPPVALILQGASLHDLTADLMRQLGLNDPDPALNNADTIRDRARQRAAARHGAAMRRRPKPAVQGG</sequence>
<gene>
    <name type="primary">ppsD</name>
    <name type="ordered locus">BQ2027_MB2959</name>
</gene>
<name>PPSD_MYCBO</name>
<protein>
    <recommendedName>
        <fullName evidence="8">Phenolphthiocerol/phthiocerol polyketide synthase subunit C</fullName>
        <ecNumber evidence="2">2.3.1.292</ecNumber>
    </recommendedName>
    <alternativeName>
        <fullName>(Phenol)carboxyphthiodiolenone synthase subunit D</fullName>
    </alternativeName>
    <alternativeName>
        <fullName>Beta-ketoacyl-acyl-carrier-protein synthase I</fullName>
    </alternativeName>
    <alternativeName>
        <fullName>Phthiocerol synthesis polyketide synthase type I PpsD</fullName>
    </alternativeName>
</protein>
<evidence type="ECO:0000250" key="1"/>
<evidence type="ECO:0000250" key="2">
    <source>
        <dbReference type="UniProtKB" id="P9WQE3"/>
    </source>
</evidence>
<evidence type="ECO:0000255" key="3">
    <source>
        <dbReference type="PROSITE-ProRule" id="PRU00258"/>
    </source>
</evidence>
<evidence type="ECO:0000255" key="4">
    <source>
        <dbReference type="PROSITE-ProRule" id="PRU01348"/>
    </source>
</evidence>
<evidence type="ECO:0000255" key="5">
    <source>
        <dbReference type="PROSITE-ProRule" id="PRU01363"/>
    </source>
</evidence>
<evidence type="ECO:0000255" key="6">
    <source>
        <dbReference type="PROSITE-ProRule" id="PRU10022"/>
    </source>
</evidence>
<evidence type="ECO:0000269" key="7">
    <source>
    </source>
</evidence>
<evidence type="ECO:0000305" key="8"/>
<feature type="chain" id="PRO_0000406949" description="Phenolphthiocerol/phthiocerol polyketide synthase subunit C">
    <location>
        <begin position="1"/>
        <end position="1827"/>
    </location>
</feature>
<feature type="domain" description="Ketosynthase family 3 (KS3)" evidence="4">
    <location>
        <begin position="35"/>
        <end position="461"/>
    </location>
</feature>
<feature type="domain" description="PKS/mFAS DH" evidence="5">
    <location>
        <begin position="910"/>
        <end position="1198"/>
    </location>
</feature>
<feature type="domain" description="Carrier" evidence="3">
    <location>
        <begin position="1706"/>
        <end position="1785"/>
    </location>
</feature>
<feature type="region of interest" description="Acyltransferase" evidence="1">
    <location>
        <begin position="566"/>
        <end position="876"/>
    </location>
</feature>
<feature type="region of interest" description="Dehydratase" evidence="1">
    <location>
        <begin position="910"/>
        <end position="1076"/>
    </location>
</feature>
<feature type="region of interest" description="N-terminal hotdog fold" evidence="5">
    <location>
        <begin position="910"/>
        <end position="1037"/>
    </location>
</feature>
<feature type="region of interest" description="C-terminal hotdog fold" evidence="5">
    <location>
        <begin position="1050"/>
        <end position="1198"/>
    </location>
</feature>
<feature type="region of interest" description="Beta-ketoacyl reductase" evidence="1">
    <location>
        <begin position="1439"/>
        <end position="1617"/>
    </location>
</feature>
<feature type="active site" description="For beta-ketoacyl synthase activity" evidence="4">
    <location>
        <position position="207"/>
    </location>
</feature>
<feature type="active site" description="For beta-ketoacyl synthase activity" evidence="4">
    <location>
        <position position="342"/>
    </location>
</feature>
<feature type="active site" description="For beta-ketoacyl synthase activity" evidence="4">
    <location>
        <position position="383"/>
    </location>
</feature>
<feature type="active site" description="For malonyltransferase activity" evidence="6">
    <location>
        <position position="654"/>
    </location>
</feature>
<feature type="active site" description="Proton acceptor; for dehydratase activity" evidence="5">
    <location>
        <position position="942"/>
    </location>
</feature>
<feature type="active site" description="Proton donor; for dehydratase activity" evidence="5">
    <location>
        <position position="1111"/>
    </location>
</feature>
<feature type="binding site" evidence="1">
    <location>
        <begin position="1440"/>
        <end position="1485"/>
    </location>
    <ligand>
        <name>NADP(+)</name>
        <dbReference type="ChEBI" id="CHEBI:58349"/>
    </ligand>
</feature>
<feature type="modified residue" description="O-(pantetheine 4'-phosphoryl)serine" evidence="3">
    <location>
        <position position="1745"/>
    </location>
</feature>
<reference key="1">
    <citation type="journal article" date="2003" name="Proc. Natl. Acad. Sci. U.S.A.">
        <title>The complete genome sequence of Mycobacterium bovis.</title>
        <authorList>
            <person name="Garnier T."/>
            <person name="Eiglmeier K."/>
            <person name="Camus J.-C."/>
            <person name="Medina N."/>
            <person name="Mansoor H."/>
            <person name="Pryor M."/>
            <person name="Duthoy S."/>
            <person name="Grondin S."/>
            <person name="Lacroix C."/>
            <person name="Monsempe C."/>
            <person name="Simon S."/>
            <person name="Harris B."/>
            <person name="Atkin R."/>
            <person name="Doggett J."/>
            <person name="Mayes R."/>
            <person name="Keating L."/>
            <person name="Wheeler P.R."/>
            <person name="Parkhill J."/>
            <person name="Barrell B.G."/>
            <person name="Cole S.T."/>
            <person name="Gordon S.V."/>
            <person name="Hewinson R.G."/>
        </authorList>
    </citation>
    <scope>NUCLEOTIDE SEQUENCE [LARGE SCALE GENOMIC DNA]</scope>
    <source>
        <strain>ATCC BAA-935 / AF2122/97</strain>
    </source>
</reference>
<reference key="2">
    <citation type="journal article" date="2017" name="Genome Announc.">
        <title>Updated reference genome sequence and annotation of Mycobacterium bovis AF2122/97.</title>
        <authorList>
            <person name="Malone K.M."/>
            <person name="Farrell D."/>
            <person name="Stuber T.P."/>
            <person name="Schubert O.T."/>
            <person name="Aebersold R."/>
            <person name="Robbe-Austerman S."/>
            <person name="Gordon S.V."/>
        </authorList>
    </citation>
    <scope>NUCLEOTIDE SEQUENCE [LARGE SCALE GENOMIC DNA]</scope>
    <scope>GENOME REANNOTATION</scope>
    <source>
        <strain>ATCC BAA-935 / AF2122/97</strain>
    </source>
</reference>
<reference key="3">
    <citation type="journal article" date="1997" name="J. Biol. Chem.">
        <title>Gene knockout reveals a novel gene cluster for the synthesis of a class of cell wall lipids unique to pathogenic mycobacteria.</title>
        <authorList>
            <person name="Azad A.K."/>
            <person name="Sirakova T.D."/>
            <person name="Fernandes N.D."/>
            <person name="Kolattukudy P.E."/>
        </authorList>
    </citation>
    <scope>FUNCTION IN THE PHTHIOCEROL AND PHENOLPHTHIOCEROL BIOSYNTHESIS</scope>
    <scope>PATHWAY</scope>
    <scope>DISRUPTION PHENOTYPE</scope>
    <source>
        <strain>BCG</strain>
    </source>
</reference>
<keyword id="KW-0276">Fatty acid metabolism</keyword>
<keyword id="KW-0443">Lipid metabolism</keyword>
<keyword id="KW-0511">Multifunctional enzyme</keyword>
<keyword id="KW-0521">NADP</keyword>
<keyword id="KW-0560">Oxidoreductase</keyword>
<keyword id="KW-0596">Phosphopantetheine</keyword>
<keyword id="KW-0597">Phosphoprotein</keyword>
<keyword id="KW-1185">Reference proteome</keyword>
<keyword id="KW-0808">Transferase</keyword>
<proteinExistence type="evidence at protein level"/>
<organism>
    <name type="scientific">Mycobacterium bovis (strain ATCC BAA-935 / AF2122/97)</name>
    <dbReference type="NCBI Taxonomy" id="233413"/>
    <lineage>
        <taxon>Bacteria</taxon>
        <taxon>Bacillati</taxon>
        <taxon>Actinomycetota</taxon>
        <taxon>Actinomycetes</taxon>
        <taxon>Mycobacteriales</taxon>
        <taxon>Mycobacteriaceae</taxon>
        <taxon>Mycobacterium</taxon>
        <taxon>Mycobacterium tuberculosis complex</taxon>
    </lineage>
</organism>
<comment type="function">
    <text evidence="2 7">Part of the PpsABCDE complex involved in the biosynthesis of the lipid core common to phthiocerols and phenolphthiocerols by successive additions of malonyl-CoA or methylmalonyl-CoA extender units (PubMed:9201977). PpsA can accept as substrate the activated forms of either icosanoyl (C20), docosanoyl (C22) or lignoceroyl (C24) groups from FadD26, or a (4-hydroxyphenyl)-C17 or (4-hydroxyphenyl)-C19 fatty acyl from FadD29 (By similarity). PpsA initiates the biosynthesis and extends its substrate using a malonyl-CoA extender unit. The PpsB and PpsC proteins add the second and third malonyl-CoA extender units. PpsD adds an (R)-methylmalonyl unit and PpsE adds a second (R)-methylmalonyl unit. The incorporation of the methylmalonyl units results in formation of two branched methyl groups in the elongated product (By similarity).</text>
</comment>
<comment type="catalytic activity">
    <reaction evidence="2">
        <text>icosanoyl-[(phenol)carboxyphthiodiolenone synthase] + 2 (S)-methylmalonyl-CoA + 3 malonyl-CoA + 5 NADPH + 10 H(+) = C32-carboxyphthiodiolenone-[(phenol)carboxyphthiodiolenone synthase] + 5 CO2 + 5 NADP(+) + 5 CoA + 2 H2O</text>
        <dbReference type="Rhea" id="RHEA:57748"/>
        <dbReference type="Rhea" id="RHEA-COMP:14985"/>
        <dbReference type="Rhea" id="RHEA-COMP:14986"/>
        <dbReference type="ChEBI" id="CHEBI:15377"/>
        <dbReference type="ChEBI" id="CHEBI:15378"/>
        <dbReference type="ChEBI" id="CHEBI:16526"/>
        <dbReference type="ChEBI" id="CHEBI:57287"/>
        <dbReference type="ChEBI" id="CHEBI:57327"/>
        <dbReference type="ChEBI" id="CHEBI:57384"/>
        <dbReference type="ChEBI" id="CHEBI:57783"/>
        <dbReference type="ChEBI" id="CHEBI:58349"/>
        <dbReference type="ChEBI" id="CHEBI:87848"/>
        <dbReference type="ChEBI" id="CHEBI:142236"/>
        <dbReference type="EC" id="2.3.1.292"/>
    </reaction>
</comment>
<comment type="catalytic activity">
    <reaction evidence="2">
        <text>docosanoyl-[(phenol)carboxyphthiodiolenone synthase] + 2 (S)-methylmalonyl-CoA + 3 malonyl-CoA + 5 NADPH + 10 H(+) = C34-carboxyphthiodiolenone-[(phenol)carboxyphthiodiolenone synthase] + 5 CO2 + 5 NADP(+) + 5 CoA + 2 H2O</text>
        <dbReference type="Rhea" id="RHEA:57752"/>
        <dbReference type="Rhea" id="RHEA-COMP:14987"/>
        <dbReference type="Rhea" id="RHEA-COMP:14988"/>
        <dbReference type="ChEBI" id="CHEBI:15377"/>
        <dbReference type="ChEBI" id="CHEBI:15378"/>
        <dbReference type="ChEBI" id="CHEBI:16526"/>
        <dbReference type="ChEBI" id="CHEBI:57287"/>
        <dbReference type="ChEBI" id="CHEBI:57327"/>
        <dbReference type="ChEBI" id="CHEBI:57384"/>
        <dbReference type="ChEBI" id="CHEBI:57783"/>
        <dbReference type="ChEBI" id="CHEBI:58349"/>
        <dbReference type="ChEBI" id="CHEBI:142237"/>
        <dbReference type="ChEBI" id="CHEBI:142238"/>
        <dbReference type="EC" id="2.3.1.292"/>
    </reaction>
</comment>
<comment type="catalytic activity">
    <reaction evidence="2">
        <text>17-(4-hydroxyphenyl)heptadecanoyl-[(phenol)carboxyphthiodiolenone synthase] + 2 (S)-methylmalonyl-CoA + 3 malonyl-CoA + 5 NADPH + 10 H(+) = C35-(phenol)carboxyphthiodiolenone-[(phenol)carboxyphthiodiolenone synthase] + 5 CO2 + 5 NADP(+) + 5 CoA + 2 H2O</text>
        <dbReference type="Rhea" id="RHEA:57756"/>
        <dbReference type="Rhea" id="RHEA-COMP:14272"/>
        <dbReference type="Rhea" id="RHEA-COMP:14989"/>
        <dbReference type="ChEBI" id="CHEBI:15377"/>
        <dbReference type="ChEBI" id="CHEBI:15378"/>
        <dbReference type="ChEBI" id="CHEBI:16526"/>
        <dbReference type="ChEBI" id="CHEBI:57287"/>
        <dbReference type="ChEBI" id="CHEBI:57327"/>
        <dbReference type="ChEBI" id="CHEBI:57384"/>
        <dbReference type="ChEBI" id="CHEBI:57783"/>
        <dbReference type="ChEBI" id="CHEBI:58349"/>
        <dbReference type="ChEBI" id="CHEBI:133300"/>
        <dbReference type="ChEBI" id="CHEBI:142259"/>
        <dbReference type="EC" id="2.3.1.292"/>
    </reaction>
</comment>
<comment type="catalytic activity">
    <reaction evidence="2">
        <text>19-(4-hydroxyphenyl)nonadecanoyl-[(phenol)carboxyphthiodiolenone synthase] + 2 (S)-methylmalonyl-CoA + 3 malonyl-CoA + 5 NADPH + 10 H(+) = C37-(phenol)carboxyphthiodiolenone-[(phenol)carboxyphthiodiolenone synthase] + 5 CO2 + 5 NADP(+) + 5 CoA + 2 H2O</text>
        <dbReference type="Rhea" id="RHEA:57760"/>
        <dbReference type="Rhea" id="RHEA-COMP:14273"/>
        <dbReference type="Rhea" id="RHEA-COMP:14990"/>
        <dbReference type="ChEBI" id="CHEBI:15377"/>
        <dbReference type="ChEBI" id="CHEBI:15378"/>
        <dbReference type="ChEBI" id="CHEBI:16526"/>
        <dbReference type="ChEBI" id="CHEBI:57287"/>
        <dbReference type="ChEBI" id="CHEBI:57327"/>
        <dbReference type="ChEBI" id="CHEBI:57384"/>
        <dbReference type="ChEBI" id="CHEBI:57783"/>
        <dbReference type="ChEBI" id="CHEBI:58349"/>
        <dbReference type="ChEBI" id="CHEBI:133301"/>
        <dbReference type="ChEBI" id="CHEBI:142260"/>
        <dbReference type="EC" id="2.3.1.292"/>
    </reaction>
</comment>
<comment type="cofactor">
    <cofactor evidence="2">
        <name>NADP(+)</name>
        <dbReference type="ChEBI" id="CHEBI:58349"/>
    </cofactor>
</comment>
<comment type="cofactor">
    <cofactor evidence="1">
        <name>pantetheine 4'-phosphate</name>
        <dbReference type="ChEBI" id="CHEBI:47942"/>
    </cofactor>
    <text evidence="1">Binds 1 phosphopantetheine covalently.</text>
</comment>
<comment type="pathway">
    <text evidence="7">Lipid metabolism; fatty acid biosynthesis.</text>
</comment>
<comment type="disruption phenotype">
    <text evidence="7">Disruption of the pps gene cluster abolishes the production of both phthiocerol and phenolphthiocerol derivatives.</text>
</comment>
<accession>Q7TXL7</accession>
<accession>A0A1R3Y2M6</accession>
<accession>X2BMU6</accession>